<name>UBIC_SHESR</name>
<comment type="function">
    <text evidence="1">Removes the pyruvyl group from chorismate, with concomitant aromatization of the ring, to provide 4-hydroxybenzoate (4HB) for the ubiquinone pathway.</text>
</comment>
<comment type="catalytic activity">
    <reaction evidence="1">
        <text>chorismate = 4-hydroxybenzoate + pyruvate</text>
        <dbReference type="Rhea" id="RHEA:16505"/>
        <dbReference type="ChEBI" id="CHEBI:15361"/>
        <dbReference type="ChEBI" id="CHEBI:17879"/>
        <dbReference type="ChEBI" id="CHEBI:29748"/>
        <dbReference type="EC" id="4.1.3.40"/>
    </reaction>
</comment>
<comment type="pathway">
    <text evidence="1">Cofactor biosynthesis; ubiquinone biosynthesis.</text>
</comment>
<comment type="subcellular location">
    <subcellularLocation>
        <location evidence="1">Cytoplasm</location>
    </subcellularLocation>
</comment>
<comment type="similarity">
    <text evidence="1">Belongs to the UbiC family.</text>
</comment>
<organism>
    <name type="scientific">Shewanella sp. (strain MR-7)</name>
    <dbReference type="NCBI Taxonomy" id="60481"/>
    <lineage>
        <taxon>Bacteria</taxon>
        <taxon>Pseudomonadati</taxon>
        <taxon>Pseudomonadota</taxon>
        <taxon>Gammaproteobacteria</taxon>
        <taxon>Alteromonadales</taxon>
        <taxon>Shewanellaceae</taxon>
        <taxon>Shewanella</taxon>
    </lineage>
</organism>
<protein>
    <recommendedName>
        <fullName evidence="1">Probable chorismate pyruvate-lyase</fullName>
        <shortName evidence="1">CL</shortName>
        <shortName evidence="1">CPL</shortName>
        <ecNumber evidence="1">4.1.3.40</ecNumber>
    </recommendedName>
</protein>
<proteinExistence type="inferred from homology"/>
<sequence>MSVTSLSFPYGESIQWFCADNAKNLPSSPLKEWLLAPGSLTQKLKGCCDKFEVKILGEGQCVPLEGEYPKQNAVWVREVLLCLDSVPWVFARTLIPQSLLSTRQADFLGLGTRPLGELLFSQDSFVPGRIEIARFTTDSRLAQLAQSLAQNVEHELWGRRRYFHHDEEEMFVSEMFLPAAVQAMARLQP</sequence>
<feature type="chain" id="PRO_0000292082" description="Probable chorismate pyruvate-lyase">
    <location>
        <begin position="1"/>
        <end position="189"/>
    </location>
</feature>
<feature type="binding site" evidence="1">
    <location>
        <position position="77"/>
    </location>
    <ligand>
        <name>substrate</name>
    </ligand>
</feature>
<feature type="binding site" evidence="1">
    <location>
        <position position="115"/>
    </location>
    <ligand>
        <name>substrate</name>
    </ligand>
</feature>
<feature type="binding site" evidence="1">
    <location>
        <position position="174"/>
    </location>
    <ligand>
        <name>substrate</name>
    </ligand>
</feature>
<keyword id="KW-0963">Cytoplasm</keyword>
<keyword id="KW-0456">Lyase</keyword>
<keyword id="KW-0670">Pyruvate</keyword>
<keyword id="KW-0831">Ubiquinone biosynthesis</keyword>
<evidence type="ECO:0000255" key="1">
    <source>
        <dbReference type="HAMAP-Rule" id="MF_01632"/>
    </source>
</evidence>
<gene>
    <name evidence="1" type="primary">ubiC</name>
    <name type="ordered locus">Shewmr7_0120</name>
</gene>
<dbReference type="EC" id="4.1.3.40" evidence="1"/>
<dbReference type="EMBL" id="CP000444">
    <property type="protein sequence ID" value="ABI41126.1"/>
    <property type="molecule type" value="Genomic_DNA"/>
</dbReference>
<dbReference type="SMR" id="Q0I0H9"/>
<dbReference type="KEGG" id="shm:Shewmr7_0120"/>
<dbReference type="HOGENOM" id="CLU_096824_1_1_6"/>
<dbReference type="UniPathway" id="UPA00232"/>
<dbReference type="GO" id="GO:0005829">
    <property type="term" value="C:cytosol"/>
    <property type="evidence" value="ECO:0007669"/>
    <property type="project" value="TreeGrafter"/>
</dbReference>
<dbReference type="GO" id="GO:0008813">
    <property type="term" value="F:chorismate lyase activity"/>
    <property type="evidence" value="ECO:0007669"/>
    <property type="project" value="UniProtKB-UniRule"/>
</dbReference>
<dbReference type="GO" id="GO:0042866">
    <property type="term" value="P:pyruvate biosynthetic process"/>
    <property type="evidence" value="ECO:0007669"/>
    <property type="project" value="UniProtKB-UniRule"/>
</dbReference>
<dbReference type="GO" id="GO:0006744">
    <property type="term" value="P:ubiquinone biosynthetic process"/>
    <property type="evidence" value="ECO:0007669"/>
    <property type="project" value="UniProtKB-UniRule"/>
</dbReference>
<dbReference type="FunFam" id="3.40.1410.10:FF:000045">
    <property type="entry name" value="Probable chorismate pyruvate-lyase"/>
    <property type="match status" value="1"/>
</dbReference>
<dbReference type="Gene3D" id="3.40.1410.10">
    <property type="entry name" value="Chorismate lyase-like"/>
    <property type="match status" value="1"/>
</dbReference>
<dbReference type="HAMAP" id="MF_01632">
    <property type="entry name" value="UbiC"/>
    <property type="match status" value="1"/>
</dbReference>
<dbReference type="InterPro" id="IPR007440">
    <property type="entry name" value="Chorismate--pyruvate_lyase"/>
</dbReference>
<dbReference type="InterPro" id="IPR028978">
    <property type="entry name" value="Chorismate_lyase_/UTRA_dom_sf"/>
</dbReference>
<dbReference type="PANTHER" id="PTHR38683">
    <property type="entry name" value="CHORISMATE PYRUVATE-LYASE"/>
    <property type="match status" value="1"/>
</dbReference>
<dbReference type="PANTHER" id="PTHR38683:SF1">
    <property type="entry name" value="CHORISMATE PYRUVATE-LYASE"/>
    <property type="match status" value="1"/>
</dbReference>
<dbReference type="Pfam" id="PF04345">
    <property type="entry name" value="Chor_lyase"/>
    <property type="match status" value="1"/>
</dbReference>
<dbReference type="SUPFAM" id="SSF64288">
    <property type="entry name" value="Chorismate lyase-like"/>
    <property type="match status" value="1"/>
</dbReference>
<reference key="1">
    <citation type="submission" date="2006-08" db="EMBL/GenBank/DDBJ databases">
        <title>Complete sequence of chromosome 1 of Shewanella sp. MR-7.</title>
        <authorList>
            <person name="Copeland A."/>
            <person name="Lucas S."/>
            <person name="Lapidus A."/>
            <person name="Barry K."/>
            <person name="Detter J.C."/>
            <person name="Glavina del Rio T."/>
            <person name="Hammon N."/>
            <person name="Israni S."/>
            <person name="Dalin E."/>
            <person name="Tice H."/>
            <person name="Pitluck S."/>
            <person name="Kiss H."/>
            <person name="Brettin T."/>
            <person name="Bruce D."/>
            <person name="Han C."/>
            <person name="Tapia R."/>
            <person name="Gilna P."/>
            <person name="Schmutz J."/>
            <person name="Larimer F."/>
            <person name="Land M."/>
            <person name="Hauser L."/>
            <person name="Kyrpides N."/>
            <person name="Mikhailova N."/>
            <person name="Nealson K."/>
            <person name="Konstantinidis K."/>
            <person name="Klappenbach J."/>
            <person name="Tiedje J."/>
            <person name="Richardson P."/>
        </authorList>
    </citation>
    <scope>NUCLEOTIDE SEQUENCE [LARGE SCALE GENOMIC DNA]</scope>
    <source>
        <strain>MR-7</strain>
    </source>
</reference>
<accession>Q0I0H9</accession>